<dbReference type="EMBL" id="J01420">
    <property type="protein sequence ID" value="AAB48649.1"/>
    <property type="molecule type" value="Genomic_DNA"/>
</dbReference>
<dbReference type="EMBL" id="V00711">
    <property type="protein sequence ID" value="CAA24085.1"/>
    <property type="molecule type" value="Genomic_DNA"/>
</dbReference>
<dbReference type="EMBL" id="AF093677">
    <property type="protein sequence ID" value="AAC63375.1"/>
    <property type="molecule type" value="mRNA"/>
</dbReference>
<dbReference type="EMBL" id="AY172335">
    <property type="protein sequence ID" value="AAN85127.1"/>
    <property type="molecule type" value="Genomic_DNA"/>
</dbReference>
<dbReference type="PIR" id="A01051">
    <property type="entry name" value="PWMS6"/>
</dbReference>
<dbReference type="RefSeq" id="NP_904333.1">
    <property type="nucleotide sequence ID" value="NC_005089.1"/>
</dbReference>
<dbReference type="SMR" id="P00848"/>
<dbReference type="BioGRID" id="201539">
    <property type="interactions" value="1"/>
</dbReference>
<dbReference type="FunCoup" id="P00848">
    <property type="interactions" value="295"/>
</dbReference>
<dbReference type="IntAct" id="P00848">
    <property type="interactions" value="1"/>
</dbReference>
<dbReference type="STRING" id="10090.ENSMUSP00000080996"/>
<dbReference type="GlyGen" id="P00848">
    <property type="glycosylation" value="1 site, 1 O-linked glycan (1 site)"/>
</dbReference>
<dbReference type="jPOST" id="P00848"/>
<dbReference type="PaxDb" id="10090-ENSMUSP00000080996"/>
<dbReference type="PeptideAtlas" id="P00848"/>
<dbReference type="ProteomicsDB" id="265181"/>
<dbReference type="Pumba" id="P00848"/>
<dbReference type="Antibodypedia" id="58052">
    <property type="antibodies" value="78 antibodies from 22 providers"/>
</dbReference>
<dbReference type="Ensembl" id="ENSMUST00000082408.1">
    <property type="protein sequence ID" value="ENSMUSP00000080996.1"/>
    <property type="gene ID" value="ENSMUSG00000064357.1"/>
</dbReference>
<dbReference type="GeneID" id="17705"/>
<dbReference type="KEGG" id="mmu:17705"/>
<dbReference type="AGR" id="MGI:99927"/>
<dbReference type="CTD" id="4508"/>
<dbReference type="MGI" id="MGI:99927">
    <property type="gene designation" value="mt-Atp6"/>
</dbReference>
<dbReference type="VEuPathDB" id="HostDB:ENSMUSG00000064357"/>
<dbReference type="eggNOG" id="KOG4665">
    <property type="taxonomic scope" value="Eukaryota"/>
</dbReference>
<dbReference type="GeneTree" id="ENSGT00390000005568"/>
<dbReference type="HOGENOM" id="CLU_041018_0_2_1"/>
<dbReference type="InParanoid" id="P00848"/>
<dbReference type="OMA" id="FFDQFMS"/>
<dbReference type="OrthoDB" id="5976622at2759"/>
<dbReference type="PhylomeDB" id="P00848"/>
<dbReference type="TreeFam" id="TF343395"/>
<dbReference type="Reactome" id="R-MMU-163210">
    <property type="pathway name" value="Formation of ATP by chemiosmotic coupling"/>
</dbReference>
<dbReference type="Reactome" id="R-MMU-8949613">
    <property type="pathway name" value="Cristae formation"/>
</dbReference>
<dbReference type="Reactome" id="R-MMU-9837999">
    <property type="pathway name" value="Mitochondrial protein degradation"/>
</dbReference>
<dbReference type="ChiTaRS" id="mt-Atp6">
    <property type="organism name" value="mouse"/>
</dbReference>
<dbReference type="PRO" id="PR:P00848"/>
<dbReference type="Proteomes" id="UP000000589">
    <property type="component" value="Mitochondrion MT"/>
</dbReference>
<dbReference type="RNAct" id="P00848">
    <property type="molecule type" value="protein"/>
</dbReference>
<dbReference type="Bgee" id="ENSMUSG00000064357">
    <property type="expression patterns" value="Expressed in epiblast (generic) and 110 other cell types or tissues"/>
</dbReference>
<dbReference type="ExpressionAtlas" id="P00848">
    <property type="expression patterns" value="baseline and differential"/>
</dbReference>
<dbReference type="GO" id="GO:0005743">
    <property type="term" value="C:mitochondrial inner membrane"/>
    <property type="evidence" value="ECO:0007669"/>
    <property type="project" value="UniProtKB-SubCell"/>
</dbReference>
<dbReference type="GO" id="GO:0005739">
    <property type="term" value="C:mitochondrion"/>
    <property type="evidence" value="ECO:0007005"/>
    <property type="project" value="MGI"/>
</dbReference>
<dbReference type="GO" id="GO:0045259">
    <property type="term" value="C:proton-transporting ATP synthase complex"/>
    <property type="evidence" value="ECO:0000250"/>
    <property type="project" value="UniProtKB"/>
</dbReference>
<dbReference type="GO" id="GO:0015252">
    <property type="term" value="F:proton channel activity"/>
    <property type="evidence" value="ECO:0000250"/>
    <property type="project" value="UniProtKB"/>
</dbReference>
<dbReference type="GO" id="GO:0046933">
    <property type="term" value="F:proton-transporting ATP synthase activity, rotational mechanism"/>
    <property type="evidence" value="ECO:0007669"/>
    <property type="project" value="Ensembl"/>
</dbReference>
<dbReference type="GO" id="GO:0015986">
    <property type="term" value="P:proton motive force-driven ATP synthesis"/>
    <property type="evidence" value="ECO:0000250"/>
    <property type="project" value="UniProtKB"/>
</dbReference>
<dbReference type="GO" id="GO:0042776">
    <property type="term" value="P:proton motive force-driven mitochondrial ATP synthesis"/>
    <property type="evidence" value="ECO:0007669"/>
    <property type="project" value="Ensembl"/>
</dbReference>
<dbReference type="GO" id="GO:1902600">
    <property type="term" value="P:proton transmembrane transport"/>
    <property type="evidence" value="ECO:0000250"/>
    <property type="project" value="UniProtKB"/>
</dbReference>
<dbReference type="GO" id="GO:0055093">
    <property type="term" value="P:response to hyperoxia"/>
    <property type="evidence" value="ECO:0007669"/>
    <property type="project" value="Ensembl"/>
</dbReference>
<dbReference type="CDD" id="cd00310">
    <property type="entry name" value="ATP-synt_Fo_a_6"/>
    <property type="match status" value="1"/>
</dbReference>
<dbReference type="FunFam" id="1.20.120.220:FF:000004">
    <property type="entry name" value="ATP synthase subunit a"/>
    <property type="match status" value="1"/>
</dbReference>
<dbReference type="Gene3D" id="1.20.120.220">
    <property type="entry name" value="ATP synthase, F0 complex, subunit A"/>
    <property type="match status" value="1"/>
</dbReference>
<dbReference type="InterPro" id="IPR000568">
    <property type="entry name" value="ATP_synth_F0_asu"/>
</dbReference>
<dbReference type="InterPro" id="IPR023011">
    <property type="entry name" value="ATP_synth_F0_asu_AS"/>
</dbReference>
<dbReference type="InterPro" id="IPR045083">
    <property type="entry name" value="ATP_synth_F0_asu_bact/mt"/>
</dbReference>
<dbReference type="InterPro" id="IPR035908">
    <property type="entry name" value="F0_ATP_A_sf"/>
</dbReference>
<dbReference type="NCBIfam" id="TIGR01131">
    <property type="entry name" value="ATP_synt_6_or_A"/>
    <property type="match status" value="1"/>
</dbReference>
<dbReference type="PANTHER" id="PTHR11410">
    <property type="entry name" value="ATP SYNTHASE SUBUNIT A"/>
    <property type="match status" value="1"/>
</dbReference>
<dbReference type="PANTHER" id="PTHR11410:SF0">
    <property type="entry name" value="ATP SYNTHASE SUBUNIT A"/>
    <property type="match status" value="1"/>
</dbReference>
<dbReference type="Pfam" id="PF00119">
    <property type="entry name" value="ATP-synt_A"/>
    <property type="match status" value="1"/>
</dbReference>
<dbReference type="PRINTS" id="PR00123">
    <property type="entry name" value="ATPASEA"/>
</dbReference>
<dbReference type="SUPFAM" id="SSF81336">
    <property type="entry name" value="F1F0 ATP synthase subunit A"/>
    <property type="match status" value="1"/>
</dbReference>
<dbReference type="PROSITE" id="PS00449">
    <property type="entry name" value="ATPASE_A"/>
    <property type="match status" value="1"/>
</dbReference>
<accession>P00848</accession>
<comment type="function">
    <text evidence="1">Subunit a, of the mitochondrial membrane ATP synthase complex (F(1)F(0) ATP synthase or Complex V) that produces ATP from ADP in the presence of a proton gradient across the membrane which is generated by electron transport complexes of the respiratory chain. ATP synthase complex consist of a soluble F(1) head domain - the catalytic core - and a membrane F(1) domain - the membrane proton channel. These two domains are linked by a central stalk rotating inside the F(1) region and a stationary peripheral stalk. During catalysis, ATP synthesis in the catalytic domain of F(1) is coupled via a rotary mechanism of the central stalk subunits to proton translocation. With the subunit c (ATP5MC1), forms the proton-conducting channel in the F(0) domain, that contains two crucial half-channels (inlet and outlet) that facilitate proton movement from the mitochondrial intermembrane space (IMS) into the matrix. Protons are taken up via the inlet half-channel and released through the outlet half-channel, following a Grotthuss mechanism.</text>
</comment>
<comment type="catalytic activity">
    <reaction evidence="1">
        <text>H(+)(in) = H(+)(out)</text>
        <dbReference type="Rhea" id="RHEA:34979"/>
        <dbReference type="ChEBI" id="CHEBI:15378"/>
    </reaction>
</comment>
<comment type="subunit">
    <text evidence="1">Component of the ATP synthase complex composed at least of ATP5F1A/subunit alpha, ATP5F1B/subunit beta, ATP5MC1/subunit c (homooctomer), MT-ATP6/subunit a, MT-ATP8/subunit 8, ATP5ME/subunit e, ATP5MF/subunit f, ATP5MG/subunit g, ATP5MK/subunit k, ATP5MJ/subunit j, ATP5F1C/subunit gamma, ATP5F1D/subunit delta, ATP5F1E/subunit epsilon, ATP5PF/subunit F6, ATP5PB/subunit b, ATP5PD/subunit d, ATP5PO/subunit OSCP. ATP synthase complex consists of a soluble F(1) head domain (subunits alpha(3) and beta(3)) - the catalytic core - and a membrane F(0) domain - the membrane proton channel (subunits c, a, 8, e, f, g, k and j). These two domains are linked by a central stalk (subunits gamma, delta, and epsilon) rotating inside the F1 region and a stationary peripheral stalk (subunits F6, b, d, and OSCP). Interacts with DNAJC30; interaction is direct.</text>
</comment>
<comment type="subcellular location">
    <subcellularLocation>
        <location>Mitochondrion inner membrane</location>
        <topology>Multi-pass membrane protein</topology>
    </subcellularLocation>
</comment>
<comment type="similarity">
    <text evidence="3">Belongs to the ATPase A chain family.</text>
</comment>
<gene>
    <name evidence="4" type="primary">Mtatp6</name>
    <name type="synonym">Atp6</name>
    <name type="synonym">Atpase6</name>
    <name type="synonym">mt-Atp6</name>
</gene>
<keyword id="KW-0066">ATP synthesis</keyword>
<keyword id="KW-0138">CF(0)</keyword>
<keyword id="KW-0375">Hydrogen ion transport</keyword>
<keyword id="KW-0406">Ion transport</keyword>
<keyword id="KW-0472">Membrane</keyword>
<keyword id="KW-0496">Mitochondrion</keyword>
<keyword id="KW-0999">Mitochondrion inner membrane</keyword>
<keyword id="KW-1185">Reference proteome</keyword>
<keyword id="KW-0812">Transmembrane</keyword>
<keyword id="KW-1133">Transmembrane helix</keyword>
<keyword id="KW-0813">Transport</keyword>
<reference key="1">
    <citation type="journal article" date="1981" name="Cell">
        <title>Sequence and gene organization of mouse mitochondrial DNA.</title>
        <authorList>
            <person name="Bibb M.J."/>
            <person name="van Etten R.A."/>
            <person name="Wright C.T."/>
            <person name="Walberg M.W."/>
            <person name="Clayton D.A."/>
        </authorList>
    </citation>
    <scope>NUCLEOTIDE SEQUENCE [GENOMIC DNA]</scope>
</reference>
<reference key="2">
    <citation type="submission" date="1998-09" db="EMBL/GenBank/DDBJ databases">
        <authorList>
            <person name="Sato M."/>
            <person name="Matsuki Y."/>
            <person name="Oguma T."/>
            <person name="Tadakuma T."/>
        </authorList>
    </citation>
    <scope>NUCLEOTIDE SEQUENCE [MRNA]</scope>
    <source>
        <strain>BALB/cJ</strain>
    </source>
</reference>
<reference key="3">
    <citation type="journal article" date="2003" name="Nucleic Acids Res.">
        <title>Revisiting the mouse mitochondrial DNA sequence.</title>
        <authorList>
            <person name="Bayona-Bafaluy M.P."/>
            <person name="Acin-Perez R."/>
            <person name="Mullikin J.C."/>
            <person name="Park J.S."/>
            <person name="Moreno-Loshuertos R."/>
            <person name="Hu P."/>
            <person name="Perez-Martos A."/>
            <person name="Fernandez-Silva P."/>
            <person name="Bai Y."/>
            <person name="Enriquez J.A."/>
        </authorList>
    </citation>
    <scope>NUCLEOTIDE SEQUENCE [LARGE SCALE GENOMIC DNA]</scope>
    <source>
        <strain>C57BL/6J</strain>
    </source>
</reference>
<reference key="4">
    <citation type="journal article" date="2010" name="Cell">
        <title>A tissue-specific atlas of mouse protein phosphorylation and expression.</title>
        <authorList>
            <person name="Huttlin E.L."/>
            <person name="Jedrychowski M.P."/>
            <person name="Elias J.E."/>
            <person name="Goswami T."/>
            <person name="Rad R."/>
            <person name="Beausoleil S.A."/>
            <person name="Villen J."/>
            <person name="Haas W."/>
            <person name="Sowa M.E."/>
            <person name="Gygi S.P."/>
        </authorList>
    </citation>
    <scope>IDENTIFICATION BY MASS SPECTROMETRY [LARGE SCALE ANALYSIS]</scope>
    <source>
        <tissue>Heart</tissue>
        <tissue>Kidney</tissue>
    </source>
</reference>
<organism>
    <name type="scientific">Mus musculus</name>
    <name type="common">Mouse</name>
    <dbReference type="NCBI Taxonomy" id="10090"/>
    <lineage>
        <taxon>Eukaryota</taxon>
        <taxon>Metazoa</taxon>
        <taxon>Chordata</taxon>
        <taxon>Craniata</taxon>
        <taxon>Vertebrata</taxon>
        <taxon>Euteleostomi</taxon>
        <taxon>Mammalia</taxon>
        <taxon>Eutheria</taxon>
        <taxon>Euarchontoglires</taxon>
        <taxon>Glires</taxon>
        <taxon>Rodentia</taxon>
        <taxon>Myomorpha</taxon>
        <taxon>Muroidea</taxon>
        <taxon>Muridae</taxon>
        <taxon>Murinae</taxon>
        <taxon>Mus</taxon>
        <taxon>Mus</taxon>
    </lineage>
</organism>
<geneLocation type="mitochondrion"/>
<evidence type="ECO:0000250" key="1">
    <source>
        <dbReference type="UniProtKB" id="P00846"/>
    </source>
</evidence>
<evidence type="ECO:0000255" key="2"/>
<evidence type="ECO:0000305" key="3"/>
<evidence type="ECO:0000312" key="4">
    <source>
        <dbReference type="MGI" id="MGI:99927"/>
    </source>
</evidence>
<proteinExistence type="evidence at protein level"/>
<name>ATP6_MOUSE</name>
<protein>
    <recommendedName>
        <fullName evidence="3">ATP synthase F(0) complex subunit a</fullName>
    </recommendedName>
    <alternativeName>
        <fullName>F-ATPase protein 6</fullName>
    </alternativeName>
    <alternativeName>
        <fullName evidence="1">Proton-conducting channel, ATP synthase F(0) complex subunit a</fullName>
    </alternativeName>
</protein>
<sequence length="226" mass="25096">MNENLFASFITPTMMGFPIVVAIIMFPSILFPSSKRLINNRLHSFQHWLVKLIIKQMMLIHTPKGRTWTLMIVSLIMFIGSTNLLGLLPHTFTPTTQLSMNLSMAIPLWAGAVITGFRHKLKSSLAHFLPQGTPISLIPMLIIIETISLFIQPMALAVRLTANITAGHLLMHLIGGATLVLMNISPPTATITFIILLLLTILEFAVALIQAYVFTLLVSLYLHDNT</sequence>
<feature type="chain" id="PRO_0000082139" description="ATP synthase F(0) complex subunit a">
    <location>
        <begin position="1"/>
        <end position="226"/>
    </location>
</feature>
<feature type="transmembrane region" description="Helical" evidence="2">
    <location>
        <begin position="6"/>
        <end position="26"/>
    </location>
</feature>
<feature type="transmembrane region" description="Helical" evidence="2">
    <location>
        <begin position="68"/>
        <end position="88"/>
    </location>
</feature>
<feature type="transmembrane region" description="Helical" evidence="2">
    <location>
        <begin position="97"/>
        <end position="117"/>
    </location>
</feature>
<feature type="transmembrane region" description="Helical" evidence="2">
    <location>
        <begin position="138"/>
        <end position="158"/>
    </location>
</feature>
<feature type="transmembrane region" description="Helical" evidence="2">
    <location>
        <begin position="164"/>
        <end position="184"/>
    </location>
</feature>
<feature type="transmembrane region" description="Helical" evidence="2">
    <location>
        <begin position="189"/>
        <end position="209"/>
    </location>
</feature>